<proteinExistence type="inferred from homology"/>
<organism>
    <name type="scientific">Saccharomyces cerevisiae (strain YJM789)</name>
    <name type="common">Baker's yeast</name>
    <dbReference type="NCBI Taxonomy" id="307796"/>
    <lineage>
        <taxon>Eukaryota</taxon>
        <taxon>Fungi</taxon>
        <taxon>Dikarya</taxon>
        <taxon>Ascomycota</taxon>
        <taxon>Saccharomycotina</taxon>
        <taxon>Saccharomycetes</taxon>
        <taxon>Saccharomycetales</taxon>
        <taxon>Saccharomycetaceae</taxon>
        <taxon>Saccharomyces</taxon>
    </lineage>
</organism>
<sequence length="1018" mass="116534">MAGQPTISRFFKKAVKSELTHKQEQEVAVGNGAGSESICLDTDEEDNLSSVASTTVTNDSFPLKGSVSSKNSKNSEKTSGTSTTFNDIDFAKKLDRIMKRRSDENVEAEDDEEEGEEDFVKKKARKSPTAKLTPLDKQVKDLKMHHRDKVLVIRVGYKYKCFAEDAVTVSRILHIKLVPGKLTIDESNPQDCNHRQFAYCSFPDVRLNVHLERLVHHNLKVAVVEQAETSAIKKHDPGASKSSVFERKISNVFTKATFGVNSTFVLRGKRILGDTNSIWALSRDVHQGKVAKYSLISVNLNNGEVVYDEFEEPNLADEKLQIRIKYLQPIEVLVNTDDLPLHVAKFFKDISCPLIHKQEYDLEDHVVQAIKVMNEKIQLSPSLIRLVSKLYSHMVEYNNEQVMLIPSIYSPFASKIHMLLDPNSLQSLDIFTHDGGKGSLFWLLDHTRTSFGLRMLREWILKPLVDVHQIEERLDAIECITSEINNSIFFESLNQMLNHTPDLLRTLNRIMYGTTSRKEVYFYLKQITSFVDHFKMHQSYLSEHFKSSDGRIGKQSPLLFRLFSELNELLSTTQLPHFLTMINVSAVMEKNSDKQVMDFFNLNNYDCSEGIIKIQRESESVRSQLKEELAEIRKYLKRPYLNFRDEVDYLIEVKNSQIKDLPDDWIKVNNTKMVSRFTTPRTQKLTQKLEYYKDLLIRESELQYKEFLNKITAEYTELRKITLNLAQYDCILSLAATSCNVNYVRPTFVNGQQAIIAKNARNPIIESLDVHYVPNDIMMSPENGKINIITGPNMGGKSSYIRQVALLTIMAQIGSFVPAEEIRLSIFENVLTRIGAHDDIINGDSTFKVEMLDILHILKNCNKRSLLLLDEVGRGTGTHDGIAISYALIKYFSELSDCPLILFTTHFPMLGEIKSPLIRNYHMDYVEEQKTGEDWMSVIFLYKLKKGLTYNSYGMNVAKLARLDKDIINRAFSISEELRKESINEDALKLFSSLKRILKSDNITATDKLAKLLSLDIH</sequence>
<keyword id="KW-0067">ATP-binding</keyword>
<keyword id="KW-0227">DNA damage</keyword>
<keyword id="KW-0234">DNA repair</keyword>
<keyword id="KW-0238">DNA-binding</keyword>
<keyword id="KW-0547">Nucleotide-binding</keyword>
<keyword id="KW-0539">Nucleus</keyword>
<protein>
    <recommendedName>
        <fullName>DNA mismatch repair protein MSH3</fullName>
    </recommendedName>
    <alternativeName>
        <fullName>Mismatch-binding protein</fullName>
        <shortName>MBP</shortName>
    </alternativeName>
    <alternativeName>
        <fullName>MutS protein homolog 3</fullName>
    </alternativeName>
</protein>
<name>MSH3_YEAS7</name>
<dbReference type="EMBL" id="AAFW02000089">
    <property type="protein sequence ID" value="EDN62202.1"/>
    <property type="status" value="ALT_INIT"/>
    <property type="molecule type" value="Genomic_DNA"/>
</dbReference>
<dbReference type="SMR" id="A6ZTR3"/>
<dbReference type="HOGENOM" id="CLU_002472_0_0_1"/>
<dbReference type="OrthoDB" id="4896at4893"/>
<dbReference type="Proteomes" id="UP000007060">
    <property type="component" value="Unassembled WGS sequence"/>
</dbReference>
<dbReference type="GO" id="GO:0005634">
    <property type="term" value="C:nucleus"/>
    <property type="evidence" value="ECO:0007669"/>
    <property type="project" value="UniProtKB-SubCell"/>
</dbReference>
<dbReference type="GO" id="GO:0005524">
    <property type="term" value="F:ATP binding"/>
    <property type="evidence" value="ECO:0007669"/>
    <property type="project" value="UniProtKB-KW"/>
</dbReference>
<dbReference type="GO" id="GO:0140664">
    <property type="term" value="F:ATP-dependent DNA damage sensor activity"/>
    <property type="evidence" value="ECO:0007669"/>
    <property type="project" value="InterPro"/>
</dbReference>
<dbReference type="GO" id="GO:0030983">
    <property type="term" value="F:mismatched DNA binding"/>
    <property type="evidence" value="ECO:0007669"/>
    <property type="project" value="InterPro"/>
</dbReference>
<dbReference type="GO" id="GO:0006298">
    <property type="term" value="P:mismatch repair"/>
    <property type="evidence" value="ECO:0007669"/>
    <property type="project" value="InterPro"/>
</dbReference>
<dbReference type="GO" id="GO:0006312">
    <property type="term" value="P:mitotic recombination"/>
    <property type="evidence" value="ECO:0007669"/>
    <property type="project" value="TreeGrafter"/>
</dbReference>
<dbReference type="CDD" id="cd03287">
    <property type="entry name" value="ABC_MSH3_euk"/>
    <property type="match status" value="1"/>
</dbReference>
<dbReference type="FunFam" id="3.40.1170.10:FF:000017">
    <property type="entry name" value="Mismatch repair protein"/>
    <property type="match status" value="1"/>
</dbReference>
<dbReference type="FunFam" id="3.40.50.300:FF:002852">
    <property type="entry name" value="Mismatch repair protein"/>
    <property type="match status" value="1"/>
</dbReference>
<dbReference type="Gene3D" id="1.10.1420.10">
    <property type="match status" value="2"/>
</dbReference>
<dbReference type="Gene3D" id="3.40.1170.10">
    <property type="entry name" value="DNA repair protein MutS, domain I"/>
    <property type="match status" value="1"/>
</dbReference>
<dbReference type="Gene3D" id="3.30.420.110">
    <property type="entry name" value="MutS, connector domain"/>
    <property type="match status" value="1"/>
</dbReference>
<dbReference type="Gene3D" id="3.40.50.300">
    <property type="entry name" value="P-loop containing nucleotide triphosphate hydrolases"/>
    <property type="match status" value="1"/>
</dbReference>
<dbReference type="InterPro" id="IPR007695">
    <property type="entry name" value="DNA_mismatch_repair_MutS-lik_N"/>
</dbReference>
<dbReference type="InterPro" id="IPR017261">
    <property type="entry name" value="DNA_mismatch_repair_MutS/MSH"/>
</dbReference>
<dbReference type="InterPro" id="IPR000432">
    <property type="entry name" value="DNA_mismatch_repair_MutS_C"/>
</dbReference>
<dbReference type="InterPro" id="IPR007861">
    <property type="entry name" value="DNA_mismatch_repair_MutS_clamp"/>
</dbReference>
<dbReference type="InterPro" id="IPR007696">
    <property type="entry name" value="DNA_mismatch_repair_MutS_core"/>
</dbReference>
<dbReference type="InterPro" id="IPR016151">
    <property type="entry name" value="DNA_mismatch_repair_MutS_N"/>
</dbReference>
<dbReference type="InterPro" id="IPR036187">
    <property type="entry name" value="DNA_mismatch_repair_MutS_sf"/>
</dbReference>
<dbReference type="InterPro" id="IPR007860">
    <property type="entry name" value="DNA_mmatch_repair_MutS_con_dom"/>
</dbReference>
<dbReference type="InterPro" id="IPR045076">
    <property type="entry name" value="MutS"/>
</dbReference>
<dbReference type="InterPro" id="IPR036678">
    <property type="entry name" value="MutS_con_dom_sf"/>
</dbReference>
<dbReference type="InterPro" id="IPR027417">
    <property type="entry name" value="P-loop_NTPase"/>
</dbReference>
<dbReference type="PANTHER" id="PTHR11361:SF122">
    <property type="entry name" value="DNA MISMATCH REPAIR PROTEIN MSH3"/>
    <property type="match status" value="1"/>
</dbReference>
<dbReference type="PANTHER" id="PTHR11361">
    <property type="entry name" value="DNA MISMATCH REPAIR PROTEIN MUTS FAMILY MEMBER"/>
    <property type="match status" value="1"/>
</dbReference>
<dbReference type="Pfam" id="PF01624">
    <property type="entry name" value="MutS_I"/>
    <property type="match status" value="1"/>
</dbReference>
<dbReference type="Pfam" id="PF05188">
    <property type="entry name" value="MutS_II"/>
    <property type="match status" value="1"/>
</dbReference>
<dbReference type="Pfam" id="PF05192">
    <property type="entry name" value="MutS_III"/>
    <property type="match status" value="1"/>
</dbReference>
<dbReference type="Pfam" id="PF05190">
    <property type="entry name" value="MutS_IV"/>
    <property type="match status" value="1"/>
</dbReference>
<dbReference type="Pfam" id="PF00488">
    <property type="entry name" value="MutS_V"/>
    <property type="match status" value="1"/>
</dbReference>
<dbReference type="PIRSF" id="PIRSF037677">
    <property type="entry name" value="DNA_mis_repair_Msh6"/>
    <property type="match status" value="1"/>
</dbReference>
<dbReference type="SMART" id="SM00534">
    <property type="entry name" value="MUTSac"/>
    <property type="match status" value="1"/>
</dbReference>
<dbReference type="SMART" id="SM00533">
    <property type="entry name" value="MUTSd"/>
    <property type="match status" value="1"/>
</dbReference>
<dbReference type="SUPFAM" id="SSF55271">
    <property type="entry name" value="DNA repair protein MutS, domain I"/>
    <property type="match status" value="1"/>
</dbReference>
<dbReference type="SUPFAM" id="SSF48334">
    <property type="entry name" value="DNA repair protein MutS, domain III"/>
    <property type="match status" value="1"/>
</dbReference>
<dbReference type="SUPFAM" id="SSF52540">
    <property type="entry name" value="P-loop containing nucleoside triphosphate hydrolases"/>
    <property type="match status" value="1"/>
</dbReference>
<dbReference type="PROSITE" id="PS00486">
    <property type="entry name" value="DNA_MISMATCH_REPAIR_2"/>
    <property type="match status" value="1"/>
</dbReference>
<gene>
    <name type="primary">MSH3</name>
    <name type="ORF">SCY_0656</name>
</gene>
<accession>A6ZTR3</accession>
<feature type="chain" id="PRO_0000338534" description="DNA mismatch repair protein MSH3">
    <location>
        <begin position="1"/>
        <end position="1018"/>
    </location>
</feature>
<feature type="region of interest" description="Disordered" evidence="3">
    <location>
        <begin position="21"/>
        <end position="82"/>
    </location>
</feature>
<feature type="region of interest" description="Disordered" evidence="3">
    <location>
        <begin position="102"/>
        <end position="127"/>
    </location>
</feature>
<feature type="region of interest" description="Mispair-binding domain" evidence="1">
    <location>
        <begin position="126"/>
        <end position="256"/>
    </location>
</feature>
<feature type="short sequence motif" description="PIP box">
    <location>
        <begin position="4"/>
        <end position="11"/>
    </location>
</feature>
<feature type="compositionally biased region" description="Polar residues" evidence="3">
    <location>
        <begin position="48"/>
        <end position="60"/>
    </location>
</feature>
<feature type="compositionally biased region" description="Low complexity" evidence="3">
    <location>
        <begin position="64"/>
        <end position="82"/>
    </location>
</feature>
<feature type="compositionally biased region" description="Acidic residues" evidence="3">
    <location>
        <begin position="105"/>
        <end position="117"/>
    </location>
</feature>
<feature type="binding site" evidence="2">
    <location>
        <begin position="791"/>
        <end position="798"/>
    </location>
    <ligand>
        <name>ATP</name>
        <dbReference type="ChEBI" id="CHEBI:30616"/>
    </ligand>
</feature>
<evidence type="ECO:0000250" key="1"/>
<evidence type="ECO:0000255" key="2"/>
<evidence type="ECO:0000256" key="3">
    <source>
        <dbReference type="SAM" id="MobiDB-lite"/>
    </source>
</evidence>
<evidence type="ECO:0000305" key="4"/>
<reference key="1">
    <citation type="journal article" date="2007" name="Proc. Natl. Acad. Sci. U.S.A.">
        <title>Genome sequencing and comparative analysis of Saccharomyces cerevisiae strain YJM789.</title>
        <authorList>
            <person name="Wei W."/>
            <person name="McCusker J.H."/>
            <person name="Hyman R.W."/>
            <person name="Jones T."/>
            <person name="Ning Y."/>
            <person name="Cao Z."/>
            <person name="Gu Z."/>
            <person name="Bruno D."/>
            <person name="Miranda M."/>
            <person name="Nguyen M."/>
            <person name="Wilhelmy J."/>
            <person name="Komp C."/>
            <person name="Tamse R."/>
            <person name="Wang X."/>
            <person name="Jia P."/>
            <person name="Luedi P."/>
            <person name="Oefner P.J."/>
            <person name="David L."/>
            <person name="Dietrich F.S."/>
            <person name="Li Y."/>
            <person name="Davis R.W."/>
            <person name="Steinmetz L.M."/>
        </authorList>
    </citation>
    <scope>NUCLEOTIDE SEQUENCE [LARGE SCALE GENOMIC DNA]</scope>
    <source>
        <strain>YJM789</strain>
    </source>
</reference>
<comment type="function">
    <text evidence="1">Component of the post-replicative DNA mismatch repair system (MMR). Heterodimerizes with MSH2 to form MutS beta, which binds to DNA mismatches thereby initiating DNA repair. MSH3 provides substrate-binding and substrate specificity to the complex. When bound, the MutS beta heterodimer bends the DNA helix and shields approximately 20 base pairs. Acts mainly to repair insertion-deletion loops (IDLs) from 2 to 13 nucleotides in size, but can also repair base-base and single insertion-deletion mismatches that occur during replication. After mismatch binding, forms a ternary complex with either the MutL alpha or MutL beta heterodimer, which is thought to be responsible for directing the downstream MMR events, including strand discrimination, excision, and resynthesis. MutS beta also has a role in regulation of heteroduplex formation during mitotic and meiotic recombination. MutS beta binds to DNA flap structures predicted to form during recombination, and is required for 3' non-homologous tail removal (NHTR). MutS beta-binding alters the DNA conformation of its substrate at the ds/ssDNA junction and may facilitate its recognition and/or cleavage by the downstream nucleotide excision repair (NER) RAD1-RAD10 endonuclease. ATP binding and hydrolysis play a pivotal role in MMR and NHTR (By similarity).</text>
</comment>
<comment type="subunit">
    <text evidence="1">Heterodimer consisting of MSH2-MSH3 (MutS beta). Forms a ternary complex with either MutL alpha (MLH1-PMS1) or MutL beta (MLH1-MLH3). MutS beta interacts with proliferating cell nuclear antigen (PCNA/POL30) (By similarity).</text>
</comment>
<comment type="subcellular location">
    <subcellularLocation>
        <location evidence="1">Nucleus</location>
    </subcellularLocation>
</comment>
<comment type="domain">
    <text evidence="1">The PIP box serves as a PCNA(POL30)-recognition and -binding motif.</text>
</comment>
<comment type="similarity">
    <text evidence="4">Belongs to the DNA mismatch repair MutS family. MSH3 subfamily.</text>
</comment>
<comment type="sequence caution" evidence="4">
    <conflict type="erroneous initiation">
        <sequence resource="EMBL-CDS" id="EDN62202"/>
    </conflict>
</comment>